<comment type="function">
    <text evidence="1">Involved in the binding of tRNA to the ribosomes.</text>
</comment>
<comment type="subunit">
    <text evidence="1">Part of the 30S ribosomal subunit.</text>
</comment>
<comment type="similarity">
    <text evidence="1">Belongs to the universal ribosomal protein uS10 family.</text>
</comment>
<gene>
    <name evidence="1" type="primary">rpsJ</name>
    <name type="ordered locus">SAHV_2235</name>
</gene>
<proteinExistence type="inferred from homology"/>
<evidence type="ECO:0000255" key="1">
    <source>
        <dbReference type="HAMAP-Rule" id="MF_00508"/>
    </source>
</evidence>
<evidence type="ECO:0000305" key="2"/>
<sequence>MAKQKIRIRLKAYDHRVIDQSAEKIVETAKRSGADVSGPIPLPTEKSVYTIIRAVHMYKDSREQFEQRTHKRLIDIVNPTPKTVDALMGLNLPSGVDIEIKL</sequence>
<feature type="chain" id="PRO_1000015120" description="Small ribosomal subunit protein uS10">
    <location>
        <begin position="1"/>
        <end position="102"/>
    </location>
</feature>
<protein>
    <recommendedName>
        <fullName evidence="1">Small ribosomal subunit protein uS10</fullName>
    </recommendedName>
    <alternativeName>
        <fullName evidence="2">30S ribosomal protein S10</fullName>
    </alternativeName>
</protein>
<keyword id="KW-0687">Ribonucleoprotein</keyword>
<keyword id="KW-0689">Ribosomal protein</keyword>
<organism>
    <name type="scientific">Staphylococcus aureus (strain Mu3 / ATCC 700698)</name>
    <dbReference type="NCBI Taxonomy" id="418127"/>
    <lineage>
        <taxon>Bacteria</taxon>
        <taxon>Bacillati</taxon>
        <taxon>Bacillota</taxon>
        <taxon>Bacilli</taxon>
        <taxon>Bacillales</taxon>
        <taxon>Staphylococcaceae</taxon>
        <taxon>Staphylococcus</taxon>
    </lineage>
</organism>
<reference key="1">
    <citation type="journal article" date="2008" name="Antimicrob. Agents Chemother.">
        <title>Mutated response regulator graR is responsible for phenotypic conversion of Staphylococcus aureus from heterogeneous vancomycin-intermediate resistance to vancomycin-intermediate resistance.</title>
        <authorList>
            <person name="Neoh H.-M."/>
            <person name="Cui L."/>
            <person name="Yuzawa H."/>
            <person name="Takeuchi F."/>
            <person name="Matsuo M."/>
            <person name="Hiramatsu K."/>
        </authorList>
    </citation>
    <scope>NUCLEOTIDE SEQUENCE [LARGE SCALE GENOMIC DNA]</scope>
    <source>
        <strain>Mu3 / ATCC 700698</strain>
    </source>
</reference>
<name>RS10_STAA1</name>
<dbReference type="EMBL" id="AP009324">
    <property type="protein sequence ID" value="BAF79118.1"/>
    <property type="molecule type" value="Genomic_DNA"/>
</dbReference>
<dbReference type="RefSeq" id="WP_001118669.1">
    <property type="nucleotide sequence ID" value="NC_009782.1"/>
</dbReference>
<dbReference type="EMDB" id="EMD-3624"/>
<dbReference type="SMR" id="A7X5G6"/>
<dbReference type="KEGG" id="saw:SAHV_2235"/>
<dbReference type="HOGENOM" id="CLU_122625_1_3_9"/>
<dbReference type="GO" id="GO:1990904">
    <property type="term" value="C:ribonucleoprotein complex"/>
    <property type="evidence" value="ECO:0007669"/>
    <property type="project" value="UniProtKB-KW"/>
</dbReference>
<dbReference type="GO" id="GO:0005840">
    <property type="term" value="C:ribosome"/>
    <property type="evidence" value="ECO:0007669"/>
    <property type="project" value="UniProtKB-KW"/>
</dbReference>
<dbReference type="GO" id="GO:0003735">
    <property type="term" value="F:structural constituent of ribosome"/>
    <property type="evidence" value="ECO:0007669"/>
    <property type="project" value="InterPro"/>
</dbReference>
<dbReference type="GO" id="GO:0000049">
    <property type="term" value="F:tRNA binding"/>
    <property type="evidence" value="ECO:0007669"/>
    <property type="project" value="UniProtKB-UniRule"/>
</dbReference>
<dbReference type="GO" id="GO:0006412">
    <property type="term" value="P:translation"/>
    <property type="evidence" value="ECO:0007669"/>
    <property type="project" value="UniProtKB-UniRule"/>
</dbReference>
<dbReference type="FunFam" id="3.30.70.600:FF:000001">
    <property type="entry name" value="30S ribosomal protein S10"/>
    <property type="match status" value="1"/>
</dbReference>
<dbReference type="Gene3D" id="3.30.70.600">
    <property type="entry name" value="Ribosomal protein S10 domain"/>
    <property type="match status" value="1"/>
</dbReference>
<dbReference type="HAMAP" id="MF_00508">
    <property type="entry name" value="Ribosomal_uS10"/>
    <property type="match status" value="1"/>
</dbReference>
<dbReference type="InterPro" id="IPR001848">
    <property type="entry name" value="Ribosomal_uS10"/>
</dbReference>
<dbReference type="InterPro" id="IPR018268">
    <property type="entry name" value="Ribosomal_uS10_CS"/>
</dbReference>
<dbReference type="InterPro" id="IPR027486">
    <property type="entry name" value="Ribosomal_uS10_dom"/>
</dbReference>
<dbReference type="InterPro" id="IPR036838">
    <property type="entry name" value="Ribosomal_uS10_dom_sf"/>
</dbReference>
<dbReference type="NCBIfam" id="NF001861">
    <property type="entry name" value="PRK00596.1"/>
    <property type="match status" value="1"/>
</dbReference>
<dbReference type="NCBIfam" id="TIGR01049">
    <property type="entry name" value="rpsJ_bact"/>
    <property type="match status" value="1"/>
</dbReference>
<dbReference type="PANTHER" id="PTHR11700">
    <property type="entry name" value="30S RIBOSOMAL PROTEIN S10 FAMILY MEMBER"/>
    <property type="match status" value="1"/>
</dbReference>
<dbReference type="Pfam" id="PF00338">
    <property type="entry name" value="Ribosomal_S10"/>
    <property type="match status" value="1"/>
</dbReference>
<dbReference type="PRINTS" id="PR00971">
    <property type="entry name" value="RIBOSOMALS10"/>
</dbReference>
<dbReference type="SMART" id="SM01403">
    <property type="entry name" value="Ribosomal_S10"/>
    <property type="match status" value="1"/>
</dbReference>
<dbReference type="SUPFAM" id="SSF54999">
    <property type="entry name" value="Ribosomal protein S10"/>
    <property type="match status" value="1"/>
</dbReference>
<dbReference type="PROSITE" id="PS00361">
    <property type="entry name" value="RIBOSOMAL_S10"/>
    <property type="match status" value="1"/>
</dbReference>
<accession>A7X5G6</accession>